<name>RL33_RHIWR</name>
<proteinExistence type="inferred from homology"/>
<feature type="chain" id="PRO_0000356676" description="Large ribosomal subunit protein bL33">
    <location>
        <begin position="1"/>
        <end position="55"/>
    </location>
</feature>
<accession>A5VA19</accession>
<gene>
    <name evidence="1" type="primary">rpmG</name>
    <name type="ordered locus">Swit_2780</name>
</gene>
<comment type="similarity">
    <text evidence="1">Belongs to the bacterial ribosomal protein bL33 family.</text>
</comment>
<keyword id="KW-1185">Reference proteome</keyword>
<keyword id="KW-0687">Ribonucleoprotein</keyword>
<keyword id="KW-0689">Ribosomal protein</keyword>
<evidence type="ECO:0000255" key="1">
    <source>
        <dbReference type="HAMAP-Rule" id="MF_00294"/>
    </source>
</evidence>
<evidence type="ECO:0000305" key="2"/>
<protein>
    <recommendedName>
        <fullName evidence="1">Large ribosomal subunit protein bL33</fullName>
    </recommendedName>
    <alternativeName>
        <fullName evidence="2">50S ribosomal protein L33</fullName>
    </alternativeName>
</protein>
<reference key="1">
    <citation type="journal article" date="2010" name="J. Bacteriol.">
        <title>Genome sequence of the dioxin-mineralizing bacterium Sphingomonas wittichii RW1.</title>
        <authorList>
            <person name="Miller T.R."/>
            <person name="Delcher A.L."/>
            <person name="Salzberg S.L."/>
            <person name="Saunders E."/>
            <person name="Detter J.C."/>
            <person name="Halden R.U."/>
        </authorList>
    </citation>
    <scope>NUCLEOTIDE SEQUENCE [LARGE SCALE GENOMIC DNA]</scope>
    <source>
        <strain>DSM 6014 / CCUG 31198 / JCM 15750 / NBRC 105917 / EY 4224 / RW1</strain>
    </source>
</reference>
<dbReference type="EMBL" id="CP000699">
    <property type="protein sequence ID" value="ABQ69135.1"/>
    <property type="molecule type" value="Genomic_DNA"/>
</dbReference>
<dbReference type="SMR" id="A5VA19"/>
<dbReference type="STRING" id="392499.Swit_2780"/>
<dbReference type="PaxDb" id="392499-Swit_2780"/>
<dbReference type="KEGG" id="swi:Swit_2780"/>
<dbReference type="eggNOG" id="COG0267">
    <property type="taxonomic scope" value="Bacteria"/>
</dbReference>
<dbReference type="HOGENOM" id="CLU_190949_1_1_5"/>
<dbReference type="OrthoDB" id="21586at2"/>
<dbReference type="Proteomes" id="UP000001989">
    <property type="component" value="Chromosome"/>
</dbReference>
<dbReference type="GO" id="GO:0022625">
    <property type="term" value="C:cytosolic large ribosomal subunit"/>
    <property type="evidence" value="ECO:0007669"/>
    <property type="project" value="TreeGrafter"/>
</dbReference>
<dbReference type="GO" id="GO:0003735">
    <property type="term" value="F:structural constituent of ribosome"/>
    <property type="evidence" value="ECO:0007669"/>
    <property type="project" value="InterPro"/>
</dbReference>
<dbReference type="GO" id="GO:0006412">
    <property type="term" value="P:translation"/>
    <property type="evidence" value="ECO:0007669"/>
    <property type="project" value="UniProtKB-UniRule"/>
</dbReference>
<dbReference type="Gene3D" id="2.20.28.120">
    <property type="entry name" value="Ribosomal protein L33"/>
    <property type="match status" value="1"/>
</dbReference>
<dbReference type="HAMAP" id="MF_00294">
    <property type="entry name" value="Ribosomal_bL33"/>
    <property type="match status" value="1"/>
</dbReference>
<dbReference type="InterPro" id="IPR001705">
    <property type="entry name" value="Ribosomal_bL33"/>
</dbReference>
<dbReference type="InterPro" id="IPR018264">
    <property type="entry name" value="Ribosomal_bL33_CS"/>
</dbReference>
<dbReference type="InterPro" id="IPR038584">
    <property type="entry name" value="Ribosomal_bL33_sf"/>
</dbReference>
<dbReference type="InterPro" id="IPR011332">
    <property type="entry name" value="Ribosomal_zn-bd"/>
</dbReference>
<dbReference type="NCBIfam" id="NF001860">
    <property type="entry name" value="PRK00595.1"/>
    <property type="match status" value="1"/>
</dbReference>
<dbReference type="NCBIfam" id="TIGR01023">
    <property type="entry name" value="rpmG_bact"/>
    <property type="match status" value="1"/>
</dbReference>
<dbReference type="PANTHER" id="PTHR15238">
    <property type="entry name" value="54S RIBOSOMAL PROTEIN L39, MITOCHONDRIAL"/>
    <property type="match status" value="1"/>
</dbReference>
<dbReference type="PANTHER" id="PTHR15238:SF1">
    <property type="entry name" value="LARGE RIBOSOMAL SUBUNIT PROTEIN BL33M"/>
    <property type="match status" value="1"/>
</dbReference>
<dbReference type="Pfam" id="PF00471">
    <property type="entry name" value="Ribosomal_L33"/>
    <property type="match status" value="1"/>
</dbReference>
<dbReference type="SUPFAM" id="SSF57829">
    <property type="entry name" value="Zn-binding ribosomal proteins"/>
    <property type="match status" value="1"/>
</dbReference>
<dbReference type="PROSITE" id="PS00582">
    <property type="entry name" value="RIBOSOMAL_L33"/>
    <property type="match status" value="1"/>
</dbReference>
<sequence length="55" mass="6417">MAKPTTVKIKLVSTADTGFFYVTKKNPRTQTEKLSFRKYDPVVRKHVDFKEAKIK</sequence>
<organism>
    <name type="scientific">Rhizorhabdus wittichii (strain DSM 6014 / CCUG 31198 / JCM 15750 / NBRC 105917 / EY 4224 / RW1)</name>
    <name type="common">Sphingomonas wittichii</name>
    <dbReference type="NCBI Taxonomy" id="392499"/>
    <lineage>
        <taxon>Bacteria</taxon>
        <taxon>Pseudomonadati</taxon>
        <taxon>Pseudomonadota</taxon>
        <taxon>Alphaproteobacteria</taxon>
        <taxon>Sphingomonadales</taxon>
        <taxon>Sphingomonadaceae</taxon>
        <taxon>Rhizorhabdus</taxon>
    </lineage>
</organism>